<geneLocation type="chloroplast"/>
<proteinExistence type="inferred from homology"/>
<evidence type="ECO:0000255" key="1">
    <source>
        <dbReference type="HAMAP-Rule" id="MF_01367"/>
    </source>
</evidence>
<evidence type="ECO:0000305" key="2"/>
<keyword id="KW-0150">Chloroplast</keyword>
<keyword id="KW-0934">Plastid</keyword>
<keyword id="KW-0687">Ribonucleoprotein</keyword>
<keyword id="KW-0689">Ribosomal protein</keyword>
<keyword id="KW-0694">RNA-binding</keyword>
<keyword id="KW-0699">rRNA-binding</keyword>
<protein>
    <recommendedName>
        <fullName evidence="1">Large ribosomal subunit protein uL14c</fullName>
    </recommendedName>
    <alternativeName>
        <fullName evidence="2">50S ribosomal protein L14, chloroplastic</fullName>
    </alternativeName>
</protein>
<dbReference type="EMBL" id="AP009123">
    <property type="protein sequence ID" value="BAF41283.1"/>
    <property type="molecule type" value="Genomic_DNA"/>
</dbReference>
<dbReference type="RefSeq" id="YP_913223.1">
    <property type="nucleotide sequence ID" value="NC_008641.1"/>
</dbReference>
<dbReference type="SMR" id="A0ZZ71"/>
<dbReference type="GeneID" id="4575233"/>
<dbReference type="GO" id="GO:0009507">
    <property type="term" value="C:chloroplast"/>
    <property type="evidence" value="ECO:0007669"/>
    <property type="project" value="UniProtKB-SubCell"/>
</dbReference>
<dbReference type="GO" id="GO:0022625">
    <property type="term" value="C:cytosolic large ribosomal subunit"/>
    <property type="evidence" value="ECO:0007669"/>
    <property type="project" value="TreeGrafter"/>
</dbReference>
<dbReference type="GO" id="GO:0070180">
    <property type="term" value="F:large ribosomal subunit rRNA binding"/>
    <property type="evidence" value="ECO:0007669"/>
    <property type="project" value="TreeGrafter"/>
</dbReference>
<dbReference type="GO" id="GO:0003735">
    <property type="term" value="F:structural constituent of ribosome"/>
    <property type="evidence" value="ECO:0007669"/>
    <property type="project" value="InterPro"/>
</dbReference>
<dbReference type="GO" id="GO:0006412">
    <property type="term" value="P:translation"/>
    <property type="evidence" value="ECO:0007669"/>
    <property type="project" value="UniProtKB-UniRule"/>
</dbReference>
<dbReference type="CDD" id="cd00337">
    <property type="entry name" value="Ribosomal_uL14"/>
    <property type="match status" value="1"/>
</dbReference>
<dbReference type="FunFam" id="2.40.150.20:FF:000002">
    <property type="entry name" value="50S ribosomal protein L14, chloroplastic"/>
    <property type="match status" value="1"/>
</dbReference>
<dbReference type="Gene3D" id="2.40.150.20">
    <property type="entry name" value="Ribosomal protein L14"/>
    <property type="match status" value="1"/>
</dbReference>
<dbReference type="HAMAP" id="MF_01367">
    <property type="entry name" value="Ribosomal_uL14"/>
    <property type="match status" value="1"/>
</dbReference>
<dbReference type="InterPro" id="IPR000218">
    <property type="entry name" value="Ribosomal_uL14"/>
</dbReference>
<dbReference type="InterPro" id="IPR005745">
    <property type="entry name" value="Ribosomal_uL14_bac-type"/>
</dbReference>
<dbReference type="InterPro" id="IPR019972">
    <property type="entry name" value="Ribosomal_uL14_CS"/>
</dbReference>
<dbReference type="InterPro" id="IPR036853">
    <property type="entry name" value="Ribosomal_uL14_sf"/>
</dbReference>
<dbReference type="NCBIfam" id="TIGR01067">
    <property type="entry name" value="rplN_bact"/>
    <property type="match status" value="1"/>
</dbReference>
<dbReference type="PANTHER" id="PTHR11761">
    <property type="entry name" value="50S/60S RIBOSOMAL PROTEIN L14/L23"/>
    <property type="match status" value="1"/>
</dbReference>
<dbReference type="PANTHER" id="PTHR11761:SF3">
    <property type="entry name" value="LARGE RIBOSOMAL SUBUNIT PROTEIN UL14M"/>
    <property type="match status" value="1"/>
</dbReference>
<dbReference type="Pfam" id="PF00238">
    <property type="entry name" value="Ribosomal_L14"/>
    <property type="match status" value="1"/>
</dbReference>
<dbReference type="SMART" id="SM01374">
    <property type="entry name" value="Ribosomal_L14"/>
    <property type="match status" value="1"/>
</dbReference>
<dbReference type="SUPFAM" id="SSF50193">
    <property type="entry name" value="Ribosomal protein L14"/>
    <property type="match status" value="1"/>
</dbReference>
<dbReference type="PROSITE" id="PS00049">
    <property type="entry name" value="RIBOSOMAL_L14"/>
    <property type="match status" value="1"/>
</dbReference>
<sequence length="122" mass="13600">MIQPQTHLNVADNSGARELMCIRVIGASNRRYAHIGDVIVAVIKEAVPNTPLERSEVIRAVIVRTRKELKRDNGMIIRYDDNAAVVIDQEGNPKGTRIFGAIARELRQLNFTKIVSLAPEVL</sequence>
<accession>A0ZZ71</accession>
<reference key="1">
    <citation type="journal article" date="2006" name="Genes Genet. Syst.">
        <title>Complete nucleotide sequence of the cotton (Gossypium barbadense L.) chloroplast genome with a comparative analysis of sequences among 9 dicot plants.</title>
        <authorList>
            <person name="Ibrahim R.I.H."/>
            <person name="Azuma J."/>
            <person name="Sakamoto M."/>
        </authorList>
    </citation>
    <scope>NUCLEOTIDE SEQUENCE [LARGE SCALE GENOMIC DNA]</scope>
</reference>
<name>RK14_GOSBA</name>
<gene>
    <name evidence="1" type="primary">rpl14</name>
</gene>
<comment type="function">
    <text evidence="1">Binds to 23S rRNA.</text>
</comment>
<comment type="subunit">
    <text evidence="1">Part of the 50S ribosomal subunit.</text>
</comment>
<comment type="subcellular location">
    <subcellularLocation>
        <location>Plastid</location>
        <location>Chloroplast</location>
    </subcellularLocation>
</comment>
<comment type="similarity">
    <text evidence="1">Belongs to the universal ribosomal protein uL14 family.</text>
</comment>
<feature type="chain" id="PRO_0000276346" description="Large ribosomal subunit protein uL14c">
    <location>
        <begin position="1"/>
        <end position="122"/>
    </location>
</feature>
<organism>
    <name type="scientific">Gossypium barbadense</name>
    <name type="common">Sea Island cotton</name>
    <name type="synonym">Hibiscus barbadensis</name>
    <dbReference type="NCBI Taxonomy" id="3634"/>
    <lineage>
        <taxon>Eukaryota</taxon>
        <taxon>Viridiplantae</taxon>
        <taxon>Streptophyta</taxon>
        <taxon>Embryophyta</taxon>
        <taxon>Tracheophyta</taxon>
        <taxon>Spermatophyta</taxon>
        <taxon>Magnoliopsida</taxon>
        <taxon>eudicotyledons</taxon>
        <taxon>Gunneridae</taxon>
        <taxon>Pentapetalae</taxon>
        <taxon>rosids</taxon>
        <taxon>malvids</taxon>
        <taxon>Malvales</taxon>
        <taxon>Malvaceae</taxon>
        <taxon>Malvoideae</taxon>
        <taxon>Gossypium</taxon>
    </lineage>
</organism>